<dbReference type="EC" id="2.1.1.144" evidence="1"/>
<dbReference type="EMBL" id="CP000720">
    <property type="protein sequence ID" value="ABS48249.1"/>
    <property type="molecule type" value="Genomic_DNA"/>
</dbReference>
<dbReference type="RefSeq" id="WP_012104924.1">
    <property type="nucleotide sequence ID" value="NC_009708.1"/>
</dbReference>
<dbReference type="SMR" id="A7FGU8"/>
<dbReference type="KEGG" id="ypi:YpsIP31758_1498"/>
<dbReference type="HOGENOM" id="CLU_037990_5_2_6"/>
<dbReference type="Proteomes" id="UP000002412">
    <property type="component" value="Chromosome"/>
</dbReference>
<dbReference type="GO" id="GO:0005737">
    <property type="term" value="C:cytoplasm"/>
    <property type="evidence" value="ECO:0007669"/>
    <property type="project" value="UniProtKB-SubCell"/>
</dbReference>
<dbReference type="GO" id="GO:0030798">
    <property type="term" value="F:trans-aconitate 2-methyltransferase activity"/>
    <property type="evidence" value="ECO:0007669"/>
    <property type="project" value="UniProtKB-UniRule"/>
</dbReference>
<dbReference type="GO" id="GO:0032259">
    <property type="term" value="P:methylation"/>
    <property type="evidence" value="ECO:0007669"/>
    <property type="project" value="UniProtKB-KW"/>
</dbReference>
<dbReference type="CDD" id="cd02440">
    <property type="entry name" value="AdoMet_MTases"/>
    <property type="match status" value="1"/>
</dbReference>
<dbReference type="Gene3D" id="1.10.150.290">
    <property type="entry name" value="S-adenosyl-L-methionine-dependent methyltransferases"/>
    <property type="match status" value="1"/>
</dbReference>
<dbReference type="Gene3D" id="3.40.50.150">
    <property type="entry name" value="Vaccinia Virus protein VP39"/>
    <property type="match status" value="1"/>
</dbReference>
<dbReference type="HAMAP" id="MF_00560">
    <property type="entry name" value="Tran_acon_Me_trans"/>
    <property type="match status" value="1"/>
</dbReference>
<dbReference type="InterPro" id="IPR041698">
    <property type="entry name" value="Methyltransf_25"/>
</dbReference>
<dbReference type="InterPro" id="IPR029063">
    <property type="entry name" value="SAM-dependent_MTases_sf"/>
</dbReference>
<dbReference type="InterPro" id="IPR023506">
    <property type="entry name" value="Trans-aconitate_MeTrfase"/>
</dbReference>
<dbReference type="InterPro" id="IPR023149">
    <property type="entry name" value="Trans_acon_MeTrfase_C"/>
</dbReference>
<dbReference type="NCBIfam" id="NF002463">
    <property type="entry name" value="PRK01683.1"/>
    <property type="match status" value="1"/>
</dbReference>
<dbReference type="PANTHER" id="PTHR43861:SF1">
    <property type="entry name" value="TRANS-ACONITATE 2-METHYLTRANSFERASE"/>
    <property type="match status" value="1"/>
</dbReference>
<dbReference type="PANTHER" id="PTHR43861">
    <property type="entry name" value="TRANS-ACONITATE 2-METHYLTRANSFERASE-RELATED"/>
    <property type="match status" value="1"/>
</dbReference>
<dbReference type="Pfam" id="PF13649">
    <property type="entry name" value="Methyltransf_25"/>
    <property type="match status" value="1"/>
</dbReference>
<dbReference type="SUPFAM" id="SSF53335">
    <property type="entry name" value="S-adenosyl-L-methionine-dependent methyltransferases"/>
    <property type="match status" value="1"/>
</dbReference>
<organism>
    <name type="scientific">Yersinia pseudotuberculosis serotype O:1b (strain IP 31758)</name>
    <dbReference type="NCBI Taxonomy" id="349747"/>
    <lineage>
        <taxon>Bacteria</taxon>
        <taxon>Pseudomonadati</taxon>
        <taxon>Pseudomonadota</taxon>
        <taxon>Gammaproteobacteria</taxon>
        <taxon>Enterobacterales</taxon>
        <taxon>Yersiniaceae</taxon>
        <taxon>Yersinia</taxon>
    </lineage>
</organism>
<comment type="function">
    <text evidence="1">Catalyzes the S-adenosylmethionine monomethyl esterification of trans-aconitate.</text>
</comment>
<comment type="catalytic activity">
    <reaction evidence="1">
        <text>trans-aconitate + S-adenosyl-L-methionine = (E)-3-(methoxycarbonyl)pent-2-enedioate + S-adenosyl-L-homocysteine</text>
        <dbReference type="Rhea" id="RHEA:14969"/>
        <dbReference type="ChEBI" id="CHEBI:15708"/>
        <dbReference type="ChEBI" id="CHEBI:57470"/>
        <dbReference type="ChEBI" id="CHEBI:57856"/>
        <dbReference type="ChEBI" id="CHEBI:59789"/>
        <dbReference type="EC" id="2.1.1.144"/>
    </reaction>
</comment>
<comment type="subcellular location">
    <subcellularLocation>
        <location evidence="1">Cytoplasm</location>
    </subcellularLocation>
</comment>
<comment type="similarity">
    <text evidence="1">Belongs to the methyltransferase superfamily. Tam family.</text>
</comment>
<gene>
    <name evidence="1" type="primary">tam</name>
    <name type="ordered locus">YpsIP31758_1498</name>
</gene>
<proteinExistence type="inferred from homology"/>
<name>TAM_YERP3</name>
<sequence>MQDWDPDLYRQFEAERTRPATDLLAHITITSPQFISDLGCGPGNSTELLHRRFPDAQLVGIDHSQAMLASAQQRLPHCTFVEADIHQWHPSQPQNLIYANASLQWLTDHPHLFPSLLSQLAPKGVLAVQMPDNLDQPSHRAMREVAENGPWQQTLQEAGATRAKVLSANHYYDLLAPHAERVDIWRTTYYHPMPSAQAIVDWLRATGLRPYLAPLTEAMQLAFLQNYLAIIDKAYPARTDGRRLLAFPRLFIVAHAQR</sequence>
<protein>
    <recommendedName>
        <fullName evidence="1">Trans-aconitate 2-methyltransferase</fullName>
        <ecNumber evidence="1">2.1.1.144</ecNumber>
    </recommendedName>
</protein>
<feature type="chain" id="PRO_1000061123" description="Trans-aconitate 2-methyltransferase">
    <location>
        <begin position="1"/>
        <end position="258"/>
    </location>
</feature>
<keyword id="KW-0963">Cytoplasm</keyword>
<keyword id="KW-0489">Methyltransferase</keyword>
<keyword id="KW-0949">S-adenosyl-L-methionine</keyword>
<keyword id="KW-0808">Transferase</keyword>
<accession>A7FGU8</accession>
<reference key="1">
    <citation type="journal article" date="2007" name="PLoS Genet.">
        <title>The complete genome sequence of Yersinia pseudotuberculosis IP31758, the causative agent of Far East scarlet-like fever.</title>
        <authorList>
            <person name="Eppinger M."/>
            <person name="Rosovitz M.J."/>
            <person name="Fricke W.F."/>
            <person name="Rasko D.A."/>
            <person name="Kokorina G."/>
            <person name="Fayolle C."/>
            <person name="Lindler L.E."/>
            <person name="Carniel E."/>
            <person name="Ravel J."/>
        </authorList>
    </citation>
    <scope>NUCLEOTIDE SEQUENCE [LARGE SCALE GENOMIC DNA]</scope>
    <source>
        <strain>IP 31758</strain>
    </source>
</reference>
<evidence type="ECO:0000255" key="1">
    <source>
        <dbReference type="HAMAP-Rule" id="MF_00560"/>
    </source>
</evidence>